<reference key="1">
    <citation type="journal article" date="2005" name="Proc. Natl. Acad. Sci. U.S.A.">
        <title>Whole genome sequence of Staphylococcus saprophyticus reveals the pathogenesis of uncomplicated urinary tract infection.</title>
        <authorList>
            <person name="Kuroda M."/>
            <person name="Yamashita A."/>
            <person name="Hirakawa H."/>
            <person name="Kumano M."/>
            <person name="Morikawa K."/>
            <person name="Higashide M."/>
            <person name="Maruyama A."/>
            <person name="Inose Y."/>
            <person name="Matoba K."/>
            <person name="Toh H."/>
            <person name="Kuhara S."/>
            <person name="Hattori M."/>
            <person name="Ohta T."/>
        </authorList>
    </citation>
    <scope>NUCLEOTIDE SEQUENCE [LARGE SCALE GENOMIC DNA]</scope>
    <source>
        <strain>ATCC 15305 / DSM 20229 / NCIMB 8711 / NCTC 7292 / S-41</strain>
    </source>
</reference>
<gene>
    <name type="primary">pstS</name>
    <name type="ordered locus">SSP1361</name>
</gene>
<comment type="function">
    <text evidence="1">Part of the ABC transporter complex PstSACB involved in phosphate import.</text>
</comment>
<comment type="subunit">
    <text evidence="4">The complex is composed of two ATP-binding proteins (PstB), two transmembrane proteins (PstC and PstA) and a solute-binding protein (PstS).</text>
</comment>
<comment type="subcellular location">
    <subcellularLocation>
        <location evidence="4">Cell membrane</location>
        <topology evidence="4">Lipid-anchor</topology>
    </subcellularLocation>
</comment>
<comment type="similarity">
    <text evidence="4">Belongs to the PstS family.</text>
</comment>
<sequence>MKKWQLFGTTAIGASLLLGACGGGGNADSGKGEGEVKGDGSSTVGPIIEKLNEKFAKDNKDVTVSSGTSGTGGGFEKFISGSTDFSNASRPIKDEEKKKLDDKGIKYDEFKIAQDGVTITVNKDNDFVDELTKEQLKEIYSGKAKTWKDVNPKWPSKEIKAYSPDQSHGTYDFFTEEVMDKGDIKAEKNADTNVIVQSVQKNEQGIGYFGYNFYEQNKDKLKEVKVKDDSGKTTEPTKKTIQDGSYALSRPLYIYTNEKKLKDNKGFQDFMKFVLEDKGKSAEDAGFVALPKKDYTEQQSKLDDIIGKDSKKDDDKDSK</sequence>
<accession>Q49XJ1</accession>
<protein>
    <recommendedName>
        <fullName>Phosphate-binding protein PstS</fullName>
        <shortName>PBP</shortName>
    </recommendedName>
</protein>
<proteinExistence type="inferred from homology"/>
<organism>
    <name type="scientific">Staphylococcus saprophyticus subsp. saprophyticus (strain ATCC 15305 / DSM 20229 / NCIMB 8711 / NCTC 7292 / S-41)</name>
    <dbReference type="NCBI Taxonomy" id="342451"/>
    <lineage>
        <taxon>Bacteria</taxon>
        <taxon>Bacillati</taxon>
        <taxon>Bacillota</taxon>
        <taxon>Bacilli</taxon>
        <taxon>Bacillales</taxon>
        <taxon>Staphylococcaceae</taxon>
        <taxon>Staphylococcus</taxon>
    </lineage>
</organism>
<name>PSTS_STAS1</name>
<dbReference type="EMBL" id="AP008934">
    <property type="protein sequence ID" value="BAE18506.1"/>
    <property type="molecule type" value="Genomic_DNA"/>
</dbReference>
<dbReference type="RefSeq" id="WP_002483330.1">
    <property type="nucleotide sequence ID" value="NZ_MTGA01000038.1"/>
</dbReference>
<dbReference type="SMR" id="Q49XJ1"/>
<dbReference type="KEGG" id="ssp:SSP1361"/>
<dbReference type="PATRIC" id="fig|342451.11.peg.1365"/>
<dbReference type="eggNOG" id="COG0226">
    <property type="taxonomic scope" value="Bacteria"/>
</dbReference>
<dbReference type="HOGENOM" id="CLU_026228_1_1_9"/>
<dbReference type="OrthoDB" id="9790048at2"/>
<dbReference type="Proteomes" id="UP000006371">
    <property type="component" value="Chromosome"/>
</dbReference>
<dbReference type="GO" id="GO:0005886">
    <property type="term" value="C:plasma membrane"/>
    <property type="evidence" value="ECO:0007669"/>
    <property type="project" value="UniProtKB-SubCell"/>
</dbReference>
<dbReference type="GO" id="GO:0042301">
    <property type="term" value="F:phosphate ion binding"/>
    <property type="evidence" value="ECO:0007669"/>
    <property type="project" value="InterPro"/>
</dbReference>
<dbReference type="GO" id="GO:0006817">
    <property type="term" value="P:phosphate ion transport"/>
    <property type="evidence" value="ECO:0007669"/>
    <property type="project" value="UniProtKB-KW"/>
</dbReference>
<dbReference type="CDD" id="cd13654">
    <property type="entry name" value="PBP2_phosphate_like_2"/>
    <property type="match status" value="1"/>
</dbReference>
<dbReference type="Gene3D" id="3.40.190.10">
    <property type="entry name" value="Periplasmic binding protein-like II"/>
    <property type="match status" value="2"/>
</dbReference>
<dbReference type="InterPro" id="IPR024370">
    <property type="entry name" value="PBP_domain"/>
</dbReference>
<dbReference type="InterPro" id="IPR011862">
    <property type="entry name" value="Phos-bd"/>
</dbReference>
<dbReference type="InterPro" id="IPR050811">
    <property type="entry name" value="Phosphate_ABC_transporter"/>
</dbReference>
<dbReference type="NCBIfam" id="TIGR02136">
    <property type="entry name" value="ptsS_2"/>
    <property type="match status" value="1"/>
</dbReference>
<dbReference type="PANTHER" id="PTHR30570">
    <property type="entry name" value="PERIPLASMIC PHOSPHATE BINDING COMPONENT OF PHOSPHATE ABC TRANSPORTER"/>
    <property type="match status" value="1"/>
</dbReference>
<dbReference type="PANTHER" id="PTHR30570:SF1">
    <property type="entry name" value="PHOSPHATE-BINDING PROTEIN PSTS"/>
    <property type="match status" value="1"/>
</dbReference>
<dbReference type="Pfam" id="PF12849">
    <property type="entry name" value="PBP_like_2"/>
    <property type="match status" value="1"/>
</dbReference>
<dbReference type="SUPFAM" id="SSF53850">
    <property type="entry name" value="Periplasmic binding protein-like II"/>
    <property type="match status" value="1"/>
</dbReference>
<dbReference type="PROSITE" id="PS51257">
    <property type="entry name" value="PROKAR_LIPOPROTEIN"/>
    <property type="match status" value="1"/>
</dbReference>
<evidence type="ECO:0000250" key="1"/>
<evidence type="ECO:0000255" key="2">
    <source>
        <dbReference type="PROSITE-ProRule" id="PRU00303"/>
    </source>
</evidence>
<evidence type="ECO:0000256" key="3">
    <source>
        <dbReference type="SAM" id="MobiDB-lite"/>
    </source>
</evidence>
<evidence type="ECO:0000305" key="4"/>
<feature type="signal peptide" evidence="2">
    <location>
        <begin position="1"/>
        <end position="20"/>
    </location>
</feature>
<feature type="chain" id="PRO_0000281665" description="Phosphate-binding protein PstS">
    <location>
        <begin position="21"/>
        <end position="319"/>
    </location>
</feature>
<feature type="region of interest" description="Disordered" evidence="3">
    <location>
        <begin position="25"/>
        <end position="44"/>
    </location>
</feature>
<feature type="region of interest" description="Disordered" evidence="3">
    <location>
        <begin position="61"/>
        <end position="98"/>
    </location>
</feature>
<feature type="region of interest" description="Disordered" evidence="3">
    <location>
        <begin position="297"/>
        <end position="319"/>
    </location>
</feature>
<feature type="compositionally biased region" description="Polar residues" evidence="3">
    <location>
        <begin position="80"/>
        <end position="89"/>
    </location>
</feature>
<feature type="lipid moiety-binding region" description="N-palmitoyl cysteine" evidence="2">
    <location>
        <position position="21"/>
    </location>
</feature>
<feature type="lipid moiety-binding region" description="S-diacylglycerol cysteine" evidence="2">
    <location>
        <position position="21"/>
    </location>
</feature>
<keyword id="KW-1003">Cell membrane</keyword>
<keyword id="KW-0449">Lipoprotein</keyword>
<keyword id="KW-0472">Membrane</keyword>
<keyword id="KW-0564">Palmitate</keyword>
<keyword id="KW-0592">Phosphate transport</keyword>
<keyword id="KW-1185">Reference proteome</keyword>
<keyword id="KW-0732">Signal</keyword>
<keyword id="KW-0813">Transport</keyword>